<organism>
    <name type="scientific">Lacticaseibacillus paracasei</name>
    <name type="common">Lactobacillus paracasei</name>
    <dbReference type="NCBI Taxonomy" id="1597"/>
    <lineage>
        <taxon>Bacteria</taxon>
        <taxon>Bacillati</taxon>
        <taxon>Bacillota</taxon>
        <taxon>Bacilli</taxon>
        <taxon>Lactobacillales</taxon>
        <taxon>Lactobacillaceae</taxon>
        <taxon>Lacticaseibacillus</taxon>
    </lineage>
</organism>
<reference key="1">
    <citation type="journal article" date="1989" name="Gene">
        <title>Cloning, sequencing and expression in Escherichia coli of the D-2-hydroxyisocaproate dehydrogenase gene of Lactobacillus casei.</title>
        <authorList>
            <person name="Lerch H.-P."/>
            <person name="Bloecker H."/>
            <person name="Kallwass H."/>
            <person name="Hoppe J."/>
            <person name="Tsai H."/>
            <person name="Collins J."/>
        </authorList>
    </citation>
    <scope>NUCLEOTIDE SEQUENCE [GENOMIC DNA]</scope>
    <scope>PARTIAL PROTEIN SEQUENCE</scope>
    <source>
        <strain>ATCC 25598 / DSM 20008 / BCRC 12193 / JCM 1181 / NCDO 2743 / NCIMB 9713 / 40</strain>
    </source>
</reference>
<reference key="2">
    <citation type="journal article" date="1985" name="Appl. Microbiol. Biotechnol.">
        <title>D-2-hydroxyisocaproate dehydrogenase from Lactobacillus casei.</title>
        <authorList>
            <person name="Hummel W."/>
            <person name="Schuette H."/>
            <person name="Kula M.-R."/>
        </authorList>
    </citation>
    <scope>FUNCTION</scope>
    <scope>CATALYTIC ACTIVITY</scope>
    <scope>ACTIVITY REGULATION</scope>
    <scope>BIOPHYSICOCHEMICAL PROPERTIES</scope>
    <scope>SUBUNIT</scope>
    <source>
        <strain>ATCC 25598 / DSM 20008 / BCRC 12193 / JCM 1181 / NCDO 2743 / NCIMB 9713 / 40</strain>
    </source>
</reference>
<reference key="3">
    <citation type="journal article" date="1994" name="J. Mol. Biol.">
        <title>Crystallization and preliminary characterization of crystals of D-2-hydroxyisocaproate dehydrogenase from Lactobacillus casei.</title>
        <authorList>
            <person name="Niefind K."/>
            <person name="Hecht H.J."/>
            <person name="Schomburg D."/>
        </authorList>
    </citation>
    <scope>CRYSTALLIZATION</scope>
    <scope>SUBUNIT</scope>
</reference>
<reference key="4">
    <citation type="journal article" date="1997" name="J. Mol. Biol.">
        <title>Crystal structure of a ternary complex of D-2-hydroxyisocaproate dehydrogenase from Lactobacillus casei, NAD+ and 2-oxoisocaproate at 1.9-A resolution.</title>
        <authorList>
            <person name="Dengler U."/>
            <person name="Niefind K."/>
            <person name="Kiess M."/>
            <person name="Schomburg D."/>
        </authorList>
    </citation>
    <scope>X-RAY CRYSTALLOGRAPHY (1.86 ANGSTROMS) IN COMPLEX WITH NAD AND 2-OXOISOCAPROATE</scope>
    <scope>SEQUENCE REVISION TO 322-333</scope>
    <scope>MASS SPECTROMETRY</scope>
    <scope>SUBUNIT</scope>
    <scope>ACTIVE SITE</scope>
    <source>
        <strain>ATCC 25598 / DSM 20008 / BCRC 12193 / JCM 1181 / NCDO 2743 / NCIMB 9713 / 40</strain>
    </source>
</reference>
<feature type="chain" id="PRO_0000075940" description="D-2-hydroxyacid dehydrogenase (NAD+)">
    <location>
        <begin position="1"/>
        <end position="333"/>
    </location>
</feature>
<feature type="active site" evidence="7">
    <location>
        <position position="234"/>
    </location>
</feature>
<feature type="active site" evidence="7">
    <location>
        <position position="263"/>
    </location>
</feature>
<feature type="active site" description="Proton donor" evidence="7">
    <location>
        <position position="295"/>
    </location>
</feature>
<feature type="binding site" evidence="2 9">
    <location>
        <position position="100"/>
    </location>
    <ligand>
        <name>4-methyl-2-oxopentanoate</name>
        <dbReference type="ChEBI" id="CHEBI:17865"/>
    </ligand>
</feature>
<feature type="binding site" evidence="2 9">
    <location>
        <position position="155"/>
    </location>
    <ligand>
        <name>NAD(+)</name>
        <dbReference type="ChEBI" id="CHEBI:57540"/>
    </ligand>
</feature>
<feature type="binding site" evidence="2 9">
    <location>
        <position position="156"/>
    </location>
    <ligand>
        <name>NAD(+)</name>
        <dbReference type="ChEBI" id="CHEBI:57540"/>
    </ligand>
</feature>
<feature type="binding site" evidence="2 9">
    <location>
        <position position="175"/>
    </location>
    <ligand>
        <name>NAD(+)</name>
        <dbReference type="ChEBI" id="CHEBI:57540"/>
    </ligand>
</feature>
<feature type="binding site" evidence="2 9">
    <location>
        <position position="205"/>
    </location>
    <ligand>
        <name>NAD(+)</name>
        <dbReference type="ChEBI" id="CHEBI:57540"/>
    </ligand>
</feature>
<feature type="binding site" evidence="2 9">
    <location>
        <position position="211"/>
    </location>
    <ligand>
        <name>NAD(+)</name>
        <dbReference type="ChEBI" id="CHEBI:57540"/>
    </ligand>
</feature>
<feature type="binding site" evidence="2 9">
    <location>
        <position position="232"/>
    </location>
    <ligand>
        <name>NAD(+)</name>
        <dbReference type="ChEBI" id="CHEBI:57540"/>
    </ligand>
</feature>
<feature type="binding site" evidence="2 9">
    <location>
        <position position="234"/>
    </location>
    <ligand>
        <name>NAD(+)</name>
        <dbReference type="ChEBI" id="CHEBI:57540"/>
    </ligand>
</feature>
<feature type="binding site" evidence="2 9">
    <location>
        <position position="258"/>
    </location>
    <ligand>
        <name>NAD(+)</name>
        <dbReference type="ChEBI" id="CHEBI:57540"/>
    </ligand>
</feature>
<feature type="binding site" evidence="2 9">
    <location>
        <position position="295"/>
    </location>
    <ligand>
        <name>4-methyl-2-oxopentanoate</name>
        <dbReference type="ChEBI" id="CHEBI:17865"/>
    </ligand>
</feature>
<feature type="sequence conflict" description="In Ref. 1." evidence="6" ref="1">
    <original>GETSTEVTGPAK</original>
    <variation>FKPARKLLVQQVVN</variation>
    <location>
        <begin position="322"/>
        <end position="333"/>
    </location>
</feature>
<feature type="strand" evidence="10">
    <location>
        <begin position="2"/>
        <end position="5"/>
    </location>
</feature>
<feature type="turn" evidence="10">
    <location>
        <begin position="10"/>
        <end position="12"/>
    </location>
</feature>
<feature type="helix" evidence="10">
    <location>
        <begin position="13"/>
        <end position="23"/>
    </location>
</feature>
<feature type="strand" evidence="10">
    <location>
        <begin position="26"/>
        <end position="29"/>
    </location>
</feature>
<feature type="helix" evidence="10">
    <location>
        <begin position="38"/>
        <end position="42"/>
    </location>
</feature>
<feature type="strand" evidence="10">
    <location>
        <begin position="46"/>
        <end position="50"/>
    </location>
</feature>
<feature type="helix" evidence="10">
    <location>
        <begin position="58"/>
        <end position="66"/>
    </location>
</feature>
<feature type="strand" evidence="10">
    <location>
        <begin position="71"/>
        <end position="77"/>
    </location>
</feature>
<feature type="helix" evidence="10">
    <location>
        <begin position="84"/>
        <end position="89"/>
    </location>
</feature>
<feature type="strand" evidence="10">
    <location>
        <begin position="93"/>
        <end position="95"/>
    </location>
</feature>
<feature type="helix" evidence="10">
    <location>
        <begin position="102"/>
        <end position="117"/>
    </location>
</feature>
<feature type="helix" evidence="10">
    <location>
        <begin position="120"/>
        <end position="128"/>
    </location>
</feature>
<feature type="helix" evidence="10">
    <location>
        <begin position="132"/>
        <end position="135"/>
    </location>
</feature>
<feature type="helix" evidence="10">
    <location>
        <begin position="143"/>
        <end position="145"/>
    </location>
</feature>
<feature type="strand" evidence="10">
    <location>
        <begin position="146"/>
        <end position="151"/>
    </location>
</feature>
<feature type="helix" evidence="10">
    <location>
        <begin position="155"/>
        <end position="166"/>
    </location>
</feature>
<feature type="strand" evidence="10">
    <location>
        <begin position="170"/>
        <end position="174"/>
    </location>
</feature>
<feature type="helix" evidence="10">
    <location>
        <begin position="191"/>
        <end position="197"/>
    </location>
</feature>
<feature type="strand" evidence="10">
    <location>
        <begin position="199"/>
        <end position="203"/>
    </location>
</feature>
<feature type="helix" evidence="10">
    <location>
        <begin position="209"/>
        <end position="211"/>
    </location>
</feature>
<feature type="helix" evidence="10">
    <location>
        <begin position="217"/>
        <end position="222"/>
    </location>
</feature>
<feature type="strand" evidence="10">
    <location>
        <begin position="227"/>
        <end position="231"/>
    </location>
</feature>
<feature type="helix" evidence="10">
    <location>
        <begin position="240"/>
        <end position="248"/>
    </location>
</feature>
<feature type="strand" evidence="10">
    <location>
        <begin position="251"/>
        <end position="259"/>
    </location>
</feature>
<feature type="helix" evidence="10">
    <location>
        <begin position="263"/>
        <end position="273"/>
    </location>
</feature>
<feature type="helix" evidence="10">
    <location>
        <begin position="279"/>
        <end position="285"/>
    </location>
</feature>
<feature type="strand" evidence="10">
    <location>
        <begin position="290"/>
        <end position="292"/>
    </location>
</feature>
<feature type="helix" evidence="10">
    <location>
        <begin position="301"/>
        <end position="321"/>
    </location>
</feature>
<comment type="function">
    <text evidence="3">Catalyzes the NADH-dependent reversible reduction of various 2-ketocarboxylic acids to the corresponding D-2-hydroxycarboxylic acids (Ref.2). In vitro can use various substrates, including 4-methyl-2-oxopentanoate (2-oxoisocaproate), 2-oxopentanoate, 2-oxohexanoate and phenylpyruvate (Ref.2).</text>
</comment>
<comment type="catalytic activity">
    <reaction evidence="3">
        <text>a (2R)-2-hydroxycarboxylate + NAD(+) = a 2-oxocarboxylate + NADH + H(+)</text>
        <dbReference type="Rhea" id="RHEA:35643"/>
        <dbReference type="ChEBI" id="CHEBI:15378"/>
        <dbReference type="ChEBI" id="CHEBI:35179"/>
        <dbReference type="ChEBI" id="CHEBI:57540"/>
        <dbReference type="ChEBI" id="CHEBI:57945"/>
        <dbReference type="ChEBI" id="CHEBI:58314"/>
        <dbReference type="EC" id="1.1.1.345"/>
    </reaction>
</comment>
<comment type="catalytic activity">
    <reaction evidence="3">
        <text>(2R)-hydroxy-4-methylpentanoate + NAD(+) = 4-methyl-2-oxopentanoate + NADH + H(+)</text>
        <dbReference type="Rhea" id="RHEA:10052"/>
        <dbReference type="ChEBI" id="CHEBI:15378"/>
        <dbReference type="ChEBI" id="CHEBI:17865"/>
        <dbReference type="ChEBI" id="CHEBI:55535"/>
        <dbReference type="ChEBI" id="CHEBI:57540"/>
        <dbReference type="ChEBI" id="CHEBI:57945"/>
        <dbReference type="EC" id="1.1.1.345"/>
    </reaction>
</comment>
<comment type="catalytic activity">
    <reaction evidence="3">
        <text>(R)-3-phenyllactate + NAD(+) = 3-phenylpyruvate + NADH + H(+)</text>
        <dbReference type="Rhea" id="RHEA:38351"/>
        <dbReference type="ChEBI" id="CHEBI:11009"/>
        <dbReference type="ChEBI" id="CHEBI:15378"/>
        <dbReference type="ChEBI" id="CHEBI:18005"/>
        <dbReference type="ChEBI" id="CHEBI:57540"/>
        <dbReference type="ChEBI" id="CHEBI:57945"/>
    </reaction>
</comment>
<comment type="activity regulation">
    <text evidence="3">Completely inhibited In the presence of 0.1 mM Hg(2+) (Ref.2). No influence on the activity could be detected with Mg(2+) and Ca(2+) and only very weak effects with Cd(2+), Co(2+) and Mn(2+) (Ref.2). Reducing agents and thiol group reagents do not affect catalytic activity (Ref.2).</text>
</comment>
<comment type="biophysicochemical properties">
    <kinetics>
        <KM evidence="3">0.06 mM for 4-methyl-2-oxopentanoate</KM>
        <KM evidence="3">0.11 mM for 2-oxopentanoate</KM>
        <KM evidence="3">0.11 mM for 2-oxohexanoate</KM>
        <KM evidence="3">0.15 mM for phenylpyruvate</KM>
        <KM evidence="3">0.01 mM for NADH</KM>
        <KM evidence="3">1.4 mM for (R)-2-hydroxy-4-methylpentanoate</KM>
        <KM evidence="3">1.1 mM for 3-phenyllactate</KM>
        <KM evidence="3">0.5 mM for NAD(+)</KM>
    </kinetics>
    <phDependence>
        <text evidence="3">Optimum pH is 5.5-7.0 for the reduction of 4-methyl-2-oxopentanoate (Ref.2). Optimum pH is 8.0-9.0 for the oxidation of (R)-2-hydroxy-4-methylpentanoate (Ref.2).</text>
    </phDependence>
    <temperatureDependence>
        <text evidence="3">Optimum temperature is 50 degrees Celsius.</text>
    </temperatureDependence>
</comment>
<comment type="subunit">
    <text evidence="1 2 3">Homodimer.</text>
</comment>
<comment type="mass spectrometry" mass="36880.0" method="Electrospray" evidence="2"/>
<comment type="miscellaneous">
    <text evidence="8">Can be applied in an industrial process for the production of D-2-hydroxycarboxylic acids.</text>
</comment>
<comment type="similarity">
    <text evidence="6">Belongs to the D-isomer specific 2-hydroxyacid dehydrogenase family.</text>
</comment>
<proteinExistence type="evidence at protein level"/>
<accession>P17584</accession>
<protein>
    <recommendedName>
        <fullName evidence="6">D-2-hydroxyacid dehydrogenase (NAD+)</fullName>
        <ecNumber evidence="3">1.1.1.345</ecNumber>
    </recommendedName>
    <alternativeName>
        <fullName evidence="4 5">D-2-hydroxyisocaproate dehydrogenase</fullName>
        <shortName evidence="4 5">D-HicDH</shortName>
    </alternativeName>
</protein>
<dbReference type="EC" id="1.1.1.345" evidence="3"/>
<dbReference type="EMBL" id="M26929">
    <property type="protein sequence ID" value="AAA25236.1"/>
    <property type="molecule type" value="Genomic_DNA"/>
</dbReference>
<dbReference type="PIR" id="JU0050">
    <property type="entry name" value="DELBC"/>
</dbReference>
<dbReference type="RefSeq" id="WP_003577354.1">
    <property type="nucleotide sequence ID" value="NZ_VTYT01000003.1"/>
</dbReference>
<dbReference type="PDB" id="1DXY">
    <property type="method" value="X-ray"/>
    <property type="resolution" value="1.86 A"/>
    <property type="chains" value="A=1-333"/>
</dbReference>
<dbReference type="PDBsum" id="1DXY"/>
<dbReference type="SMR" id="P17584"/>
<dbReference type="DrugBank" id="DB03229">
    <property type="generic name" value="alpha-Ketoisocaproic acid"/>
</dbReference>
<dbReference type="OrthoDB" id="9805416at2"/>
<dbReference type="BRENDA" id="1.1.1.345">
    <property type="organism ID" value="2884"/>
</dbReference>
<dbReference type="EvolutionaryTrace" id="P17584"/>
<dbReference type="GO" id="GO:0008720">
    <property type="term" value="F:D-lactate dehydrogenase activity"/>
    <property type="evidence" value="ECO:0007669"/>
    <property type="project" value="TreeGrafter"/>
</dbReference>
<dbReference type="GO" id="GO:0051287">
    <property type="term" value="F:NAD binding"/>
    <property type="evidence" value="ECO:0007669"/>
    <property type="project" value="InterPro"/>
</dbReference>
<dbReference type="GO" id="GO:0097256">
    <property type="term" value="F:phenyllactate dehydrogenase (NAD+) activity"/>
    <property type="evidence" value="ECO:0007669"/>
    <property type="project" value="RHEA"/>
</dbReference>
<dbReference type="CDD" id="cd12186">
    <property type="entry name" value="LDH"/>
    <property type="match status" value="1"/>
</dbReference>
<dbReference type="Gene3D" id="3.40.50.720">
    <property type="entry name" value="NAD(P)-binding Rossmann-like Domain"/>
    <property type="match status" value="2"/>
</dbReference>
<dbReference type="InterPro" id="IPR006139">
    <property type="entry name" value="D-isomer_2_OHA_DH_cat_dom"/>
</dbReference>
<dbReference type="InterPro" id="IPR029753">
    <property type="entry name" value="D-isomer_DH_CS"/>
</dbReference>
<dbReference type="InterPro" id="IPR029752">
    <property type="entry name" value="D-isomer_DH_CS1"/>
</dbReference>
<dbReference type="InterPro" id="IPR006140">
    <property type="entry name" value="D-isomer_DH_NAD-bd"/>
</dbReference>
<dbReference type="InterPro" id="IPR036291">
    <property type="entry name" value="NAD(P)-bd_dom_sf"/>
</dbReference>
<dbReference type="PANTHER" id="PTHR43026">
    <property type="entry name" value="2-HYDROXYACID DEHYDROGENASE HOMOLOG 1-RELATED"/>
    <property type="match status" value="1"/>
</dbReference>
<dbReference type="PANTHER" id="PTHR43026:SF1">
    <property type="entry name" value="2-HYDROXYACID DEHYDROGENASE HOMOLOG 1-RELATED"/>
    <property type="match status" value="1"/>
</dbReference>
<dbReference type="Pfam" id="PF00389">
    <property type="entry name" value="2-Hacid_dh"/>
    <property type="match status" value="1"/>
</dbReference>
<dbReference type="Pfam" id="PF02826">
    <property type="entry name" value="2-Hacid_dh_C"/>
    <property type="match status" value="1"/>
</dbReference>
<dbReference type="SUPFAM" id="SSF52283">
    <property type="entry name" value="Formate/glycerate dehydrogenase catalytic domain-like"/>
    <property type="match status" value="1"/>
</dbReference>
<dbReference type="SUPFAM" id="SSF51735">
    <property type="entry name" value="NAD(P)-binding Rossmann-fold domains"/>
    <property type="match status" value="1"/>
</dbReference>
<dbReference type="PROSITE" id="PS00065">
    <property type="entry name" value="D_2_HYDROXYACID_DH_1"/>
    <property type="match status" value="1"/>
</dbReference>
<dbReference type="PROSITE" id="PS00670">
    <property type="entry name" value="D_2_HYDROXYACID_DH_2"/>
    <property type="match status" value="1"/>
</dbReference>
<dbReference type="PROSITE" id="PS00671">
    <property type="entry name" value="D_2_HYDROXYACID_DH_3"/>
    <property type="match status" value="1"/>
</dbReference>
<sequence length="333" mass="36893">MKIIAYGARVDEIQYFKQWAKDTGNTLEYHTEFLDENTVEWAKGFDGINSLQTTPYAAGVFEKMHAYGIKFLTIRNVGTDNIDMTAMKQYGIRLSNVPAYSPAAIAEFALTDTLYLLRNMGKVQAQLQAGDYEKAGTFIGKELGQQTVGVMGTGHIGQVAIKLFKGFGAKVIAYDPYPMKGDHPDFDYVSLEDLFKQSDVIDLHVPGIEQNTHIINEAAFNLMKPGAIVINTARPNLIDTQAMLSNLKSGKLAGVGIDTYEYETEDLLNLAKHGSFKDPLWDELLGMPNVVLSPHIAYYTETAVHNMVYFSLQHLVDFLTKGETSTEVTGPAK</sequence>
<evidence type="ECO:0000269" key="1">
    <source>
    </source>
</evidence>
<evidence type="ECO:0000269" key="2">
    <source>
    </source>
</evidence>
<evidence type="ECO:0000269" key="3">
    <source ref="2"/>
</evidence>
<evidence type="ECO:0000303" key="4">
    <source>
    </source>
</evidence>
<evidence type="ECO:0000303" key="5">
    <source ref="2"/>
</evidence>
<evidence type="ECO:0000305" key="6"/>
<evidence type="ECO:0000305" key="7">
    <source>
    </source>
</evidence>
<evidence type="ECO:0000305" key="8">
    <source ref="2"/>
</evidence>
<evidence type="ECO:0007744" key="9">
    <source>
        <dbReference type="PDB" id="1DXY"/>
    </source>
</evidence>
<evidence type="ECO:0007829" key="10">
    <source>
        <dbReference type="PDB" id="1DXY"/>
    </source>
</evidence>
<keyword id="KW-0002">3D-structure</keyword>
<keyword id="KW-0903">Direct protein sequencing</keyword>
<keyword id="KW-0520">NAD</keyword>
<keyword id="KW-0560">Oxidoreductase</keyword>
<name>DHD2_LACPA</name>